<evidence type="ECO:0000255" key="1">
    <source>
        <dbReference type="HAMAP-Rule" id="MF_01595"/>
    </source>
</evidence>
<evidence type="ECO:0000256" key="2">
    <source>
        <dbReference type="SAM" id="MobiDB-lite"/>
    </source>
</evidence>
<gene>
    <name evidence="1" type="primary">pnp</name>
    <name type="ordered locus">EcSMS35_3460</name>
</gene>
<feature type="chain" id="PRO_1000147918" description="Polyribonucleotide nucleotidyltransferase">
    <location>
        <begin position="1"/>
        <end position="711"/>
    </location>
</feature>
<feature type="domain" description="KH" evidence="1">
    <location>
        <begin position="553"/>
        <end position="612"/>
    </location>
</feature>
<feature type="domain" description="S1 motif" evidence="1">
    <location>
        <begin position="622"/>
        <end position="690"/>
    </location>
</feature>
<feature type="region of interest" description="Disordered" evidence="2">
    <location>
        <begin position="689"/>
        <end position="711"/>
    </location>
</feature>
<feature type="compositionally biased region" description="Low complexity" evidence="2">
    <location>
        <begin position="694"/>
        <end position="711"/>
    </location>
</feature>
<feature type="binding site" evidence="1">
    <location>
        <position position="486"/>
    </location>
    <ligand>
        <name>Mg(2+)</name>
        <dbReference type="ChEBI" id="CHEBI:18420"/>
    </ligand>
</feature>
<feature type="binding site" evidence="1">
    <location>
        <position position="492"/>
    </location>
    <ligand>
        <name>Mg(2+)</name>
        <dbReference type="ChEBI" id="CHEBI:18420"/>
    </ligand>
</feature>
<keyword id="KW-0963">Cytoplasm</keyword>
<keyword id="KW-0460">Magnesium</keyword>
<keyword id="KW-0479">Metal-binding</keyword>
<keyword id="KW-0548">Nucleotidyltransferase</keyword>
<keyword id="KW-0694">RNA-binding</keyword>
<keyword id="KW-0808">Transferase</keyword>
<protein>
    <recommendedName>
        <fullName evidence="1">Polyribonucleotide nucleotidyltransferase</fullName>
        <ecNumber evidence="1">2.7.7.8</ecNumber>
    </recommendedName>
    <alternativeName>
        <fullName evidence="1">Polynucleotide phosphorylase</fullName>
        <shortName evidence="1">PNPase</shortName>
    </alternativeName>
</protein>
<comment type="function">
    <text evidence="1">Involved in mRNA degradation. Catalyzes the phosphorolysis of single-stranded polyribonucleotides processively in the 3'- to 5'-direction.</text>
</comment>
<comment type="catalytic activity">
    <reaction evidence="1">
        <text>RNA(n+1) + phosphate = RNA(n) + a ribonucleoside 5'-diphosphate</text>
        <dbReference type="Rhea" id="RHEA:22096"/>
        <dbReference type="Rhea" id="RHEA-COMP:14527"/>
        <dbReference type="Rhea" id="RHEA-COMP:17342"/>
        <dbReference type="ChEBI" id="CHEBI:43474"/>
        <dbReference type="ChEBI" id="CHEBI:57930"/>
        <dbReference type="ChEBI" id="CHEBI:140395"/>
        <dbReference type="EC" id="2.7.7.8"/>
    </reaction>
</comment>
<comment type="cofactor">
    <cofactor evidence="1">
        <name>Mg(2+)</name>
        <dbReference type="ChEBI" id="CHEBI:18420"/>
    </cofactor>
</comment>
<comment type="subunit">
    <text evidence="1">Component of the RNA degradosome, which is a multiprotein complex involved in RNA processing and mRNA degradation.</text>
</comment>
<comment type="subcellular location">
    <subcellularLocation>
        <location evidence="1">Cytoplasm</location>
    </subcellularLocation>
</comment>
<comment type="similarity">
    <text evidence="1">Belongs to the polyribonucleotide nucleotidyltransferase family.</text>
</comment>
<accession>B1LFR6</accession>
<name>PNP_ECOSM</name>
<sequence>MLNPIVRKFQYGQHTVTLETGMMARQATAAVMVSMDDTAVFVTVVGQKKAKPGQDFFPLTVNYQERTYAAGRIPGSFFRREGRPSEGETLIARLIDRPIRPLFPEGFVNEVQVIATVVSVNPQVNPDIVAMIGASAALSLSGIPFNGPIGAARVGYINDQYVLNPTQDELKESKLDLVVAGTEAAVLMVESEAELLSEDQMLGAVVFGHEQQQVVIQNINELVKEAGKPRWDWQPEPVNEALNARVAALAEARLSDAYRITDKQERYAQVDVIKSETIATLLAEDETLDENELGEILHAIEKNVVRSRVLAGEPRIDGREKDMIRGLDVRTGVLPRTHGSALFTRGETQALVTATLGTARDAQVLDELMGERTDTFLFHYNFPPYSVGETGMVGSPKRREIGHGRLAKRGVLAVMPDMDKFPYTVRVVSEITESNGSSSMASVCGASLALMDAGVPIKAAVAGIAMGLVKEGDNYVVLSDILGDEDHLGDMDFKVAGSRDGISALQMDIKIEGITKEIMQVALNQAKGARLHILGVMEQAINAPRGDISEFAPRIHTIKINPDKIKDVIGKGGSVIRALTEETGTTIEIEDDGTVKIAATDGEKAKHAIRRIEEITAEIEVGRVYNGKVTRIVDFGAFVAIGGGKEGLVHISQIADKRVEKVTDYLQMGQEVPVKVLEVDRQGRIRLSIKEATEQSQPAAAPEAPAAEQGE</sequence>
<organism>
    <name type="scientific">Escherichia coli (strain SMS-3-5 / SECEC)</name>
    <dbReference type="NCBI Taxonomy" id="439855"/>
    <lineage>
        <taxon>Bacteria</taxon>
        <taxon>Pseudomonadati</taxon>
        <taxon>Pseudomonadota</taxon>
        <taxon>Gammaproteobacteria</taxon>
        <taxon>Enterobacterales</taxon>
        <taxon>Enterobacteriaceae</taxon>
        <taxon>Escherichia</taxon>
    </lineage>
</organism>
<dbReference type="EC" id="2.7.7.8" evidence="1"/>
<dbReference type="EMBL" id="CP000970">
    <property type="protein sequence ID" value="ACB18161.1"/>
    <property type="molecule type" value="Genomic_DNA"/>
</dbReference>
<dbReference type="RefSeq" id="WP_001298330.1">
    <property type="nucleotide sequence ID" value="NC_010498.1"/>
</dbReference>
<dbReference type="SMR" id="B1LFR6"/>
<dbReference type="KEGG" id="ecm:EcSMS35_3460"/>
<dbReference type="HOGENOM" id="CLU_004217_2_2_6"/>
<dbReference type="Proteomes" id="UP000007011">
    <property type="component" value="Chromosome"/>
</dbReference>
<dbReference type="GO" id="GO:0005829">
    <property type="term" value="C:cytosol"/>
    <property type="evidence" value="ECO:0007669"/>
    <property type="project" value="TreeGrafter"/>
</dbReference>
<dbReference type="GO" id="GO:0000175">
    <property type="term" value="F:3'-5'-RNA exonuclease activity"/>
    <property type="evidence" value="ECO:0007669"/>
    <property type="project" value="TreeGrafter"/>
</dbReference>
<dbReference type="GO" id="GO:0000287">
    <property type="term" value="F:magnesium ion binding"/>
    <property type="evidence" value="ECO:0007669"/>
    <property type="project" value="UniProtKB-UniRule"/>
</dbReference>
<dbReference type="GO" id="GO:0004654">
    <property type="term" value="F:polyribonucleotide nucleotidyltransferase activity"/>
    <property type="evidence" value="ECO:0007669"/>
    <property type="project" value="UniProtKB-UniRule"/>
</dbReference>
<dbReference type="GO" id="GO:0003723">
    <property type="term" value="F:RNA binding"/>
    <property type="evidence" value="ECO:0007669"/>
    <property type="project" value="UniProtKB-UniRule"/>
</dbReference>
<dbReference type="GO" id="GO:0006402">
    <property type="term" value="P:mRNA catabolic process"/>
    <property type="evidence" value="ECO:0007669"/>
    <property type="project" value="UniProtKB-UniRule"/>
</dbReference>
<dbReference type="GO" id="GO:0006396">
    <property type="term" value="P:RNA processing"/>
    <property type="evidence" value="ECO:0007669"/>
    <property type="project" value="InterPro"/>
</dbReference>
<dbReference type="CDD" id="cd02393">
    <property type="entry name" value="KH-I_PNPase"/>
    <property type="match status" value="1"/>
</dbReference>
<dbReference type="CDD" id="cd11363">
    <property type="entry name" value="RNase_PH_PNPase_1"/>
    <property type="match status" value="1"/>
</dbReference>
<dbReference type="CDD" id="cd11364">
    <property type="entry name" value="RNase_PH_PNPase_2"/>
    <property type="match status" value="1"/>
</dbReference>
<dbReference type="CDD" id="cd04472">
    <property type="entry name" value="S1_PNPase"/>
    <property type="match status" value="1"/>
</dbReference>
<dbReference type="FunFam" id="2.40.50.140:FF:000023">
    <property type="entry name" value="Polyribonucleotide nucleotidyltransferase"/>
    <property type="match status" value="1"/>
</dbReference>
<dbReference type="FunFam" id="3.30.1370.10:FF:000001">
    <property type="entry name" value="Polyribonucleotide nucleotidyltransferase"/>
    <property type="match status" value="1"/>
</dbReference>
<dbReference type="FunFam" id="3.30.230.70:FF:000001">
    <property type="entry name" value="Polyribonucleotide nucleotidyltransferase"/>
    <property type="match status" value="1"/>
</dbReference>
<dbReference type="FunFam" id="3.30.230.70:FF:000002">
    <property type="entry name" value="Polyribonucleotide nucleotidyltransferase"/>
    <property type="match status" value="1"/>
</dbReference>
<dbReference type="Gene3D" id="3.30.230.70">
    <property type="entry name" value="GHMP Kinase, N-terminal domain"/>
    <property type="match status" value="2"/>
</dbReference>
<dbReference type="Gene3D" id="3.30.1370.10">
    <property type="entry name" value="K Homology domain, type 1"/>
    <property type="match status" value="1"/>
</dbReference>
<dbReference type="Gene3D" id="2.40.50.140">
    <property type="entry name" value="Nucleic acid-binding proteins"/>
    <property type="match status" value="1"/>
</dbReference>
<dbReference type="HAMAP" id="MF_01595">
    <property type="entry name" value="PNPase"/>
    <property type="match status" value="1"/>
</dbReference>
<dbReference type="InterPro" id="IPR001247">
    <property type="entry name" value="ExoRNase_PH_dom1"/>
</dbReference>
<dbReference type="InterPro" id="IPR015847">
    <property type="entry name" value="ExoRNase_PH_dom2"/>
</dbReference>
<dbReference type="InterPro" id="IPR036345">
    <property type="entry name" value="ExoRNase_PH_dom2_sf"/>
</dbReference>
<dbReference type="InterPro" id="IPR004087">
    <property type="entry name" value="KH_dom"/>
</dbReference>
<dbReference type="InterPro" id="IPR004088">
    <property type="entry name" value="KH_dom_type_1"/>
</dbReference>
<dbReference type="InterPro" id="IPR036612">
    <property type="entry name" value="KH_dom_type_1_sf"/>
</dbReference>
<dbReference type="InterPro" id="IPR012340">
    <property type="entry name" value="NA-bd_OB-fold"/>
</dbReference>
<dbReference type="InterPro" id="IPR012162">
    <property type="entry name" value="PNPase"/>
</dbReference>
<dbReference type="InterPro" id="IPR027408">
    <property type="entry name" value="PNPase/RNase_PH_dom_sf"/>
</dbReference>
<dbReference type="InterPro" id="IPR015848">
    <property type="entry name" value="PNPase_PH_RNA-bd_bac/org-type"/>
</dbReference>
<dbReference type="InterPro" id="IPR036456">
    <property type="entry name" value="PNPase_PH_RNA-bd_sf"/>
</dbReference>
<dbReference type="InterPro" id="IPR020568">
    <property type="entry name" value="Ribosomal_Su5_D2-typ_SF"/>
</dbReference>
<dbReference type="InterPro" id="IPR003029">
    <property type="entry name" value="S1_domain"/>
</dbReference>
<dbReference type="NCBIfam" id="TIGR03591">
    <property type="entry name" value="polynuc_phos"/>
    <property type="match status" value="1"/>
</dbReference>
<dbReference type="NCBIfam" id="NF008805">
    <property type="entry name" value="PRK11824.1"/>
    <property type="match status" value="1"/>
</dbReference>
<dbReference type="PANTHER" id="PTHR11252">
    <property type="entry name" value="POLYRIBONUCLEOTIDE NUCLEOTIDYLTRANSFERASE"/>
    <property type="match status" value="1"/>
</dbReference>
<dbReference type="PANTHER" id="PTHR11252:SF0">
    <property type="entry name" value="POLYRIBONUCLEOTIDE NUCLEOTIDYLTRANSFERASE 1, MITOCHONDRIAL"/>
    <property type="match status" value="1"/>
</dbReference>
<dbReference type="Pfam" id="PF00013">
    <property type="entry name" value="KH_1"/>
    <property type="match status" value="1"/>
</dbReference>
<dbReference type="Pfam" id="PF03726">
    <property type="entry name" value="PNPase"/>
    <property type="match status" value="1"/>
</dbReference>
<dbReference type="Pfam" id="PF01138">
    <property type="entry name" value="RNase_PH"/>
    <property type="match status" value="2"/>
</dbReference>
<dbReference type="Pfam" id="PF03725">
    <property type="entry name" value="RNase_PH_C"/>
    <property type="match status" value="2"/>
</dbReference>
<dbReference type="Pfam" id="PF00575">
    <property type="entry name" value="S1"/>
    <property type="match status" value="1"/>
</dbReference>
<dbReference type="PIRSF" id="PIRSF005499">
    <property type="entry name" value="PNPase"/>
    <property type="match status" value="1"/>
</dbReference>
<dbReference type="SMART" id="SM00322">
    <property type="entry name" value="KH"/>
    <property type="match status" value="1"/>
</dbReference>
<dbReference type="SMART" id="SM00316">
    <property type="entry name" value="S1"/>
    <property type="match status" value="1"/>
</dbReference>
<dbReference type="SUPFAM" id="SSF54791">
    <property type="entry name" value="Eukaryotic type KH-domain (KH-domain type I)"/>
    <property type="match status" value="1"/>
</dbReference>
<dbReference type="SUPFAM" id="SSF50249">
    <property type="entry name" value="Nucleic acid-binding proteins"/>
    <property type="match status" value="1"/>
</dbReference>
<dbReference type="SUPFAM" id="SSF46915">
    <property type="entry name" value="Polynucleotide phosphorylase/guanosine pentaphosphate synthase (PNPase/GPSI), domain 3"/>
    <property type="match status" value="1"/>
</dbReference>
<dbReference type="SUPFAM" id="SSF55666">
    <property type="entry name" value="Ribonuclease PH domain 2-like"/>
    <property type="match status" value="2"/>
</dbReference>
<dbReference type="SUPFAM" id="SSF54211">
    <property type="entry name" value="Ribosomal protein S5 domain 2-like"/>
    <property type="match status" value="2"/>
</dbReference>
<dbReference type="PROSITE" id="PS50084">
    <property type="entry name" value="KH_TYPE_1"/>
    <property type="match status" value="1"/>
</dbReference>
<dbReference type="PROSITE" id="PS50126">
    <property type="entry name" value="S1"/>
    <property type="match status" value="1"/>
</dbReference>
<reference key="1">
    <citation type="journal article" date="2008" name="J. Bacteriol.">
        <title>Insights into the environmental resistance gene pool from the genome sequence of the multidrug-resistant environmental isolate Escherichia coli SMS-3-5.</title>
        <authorList>
            <person name="Fricke W.F."/>
            <person name="Wright M.S."/>
            <person name="Lindell A.H."/>
            <person name="Harkins D.M."/>
            <person name="Baker-Austin C."/>
            <person name="Ravel J."/>
            <person name="Stepanauskas R."/>
        </authorList>
    </citation>
    <scope>NUCLEOTIDE SEQUENCE [LARGE SCALE GENOMIC DNA]</scope>
    <source>
        <strain>SMS-3-5 / SECEC</strain>
    </source>
</reference>
<proteinExistence type="inferred from homology"/>